<reference key="1">
    <citation type="journal article" date="1996" name="DNA Res.">
        <title>A 718-kb DNA sequence of the Escherichia coli K-12 genome corresponding to the 12.7-28.0 min region on the linkage map.</title>
        <authorList>
            <person name="Oshima T."/>
            <person name="Aiba H."/>
            <person name="Baba T."/>
            <person name="Fujita K."/>
            <person name="Hayashi K."/>
            <person name="Honjo A."/>
            <person name="Ikemoto K."/>
            <person name="Inada T."/>
            <person name="Itoh T."/>
            <person name="Kajihara M."/>
            <person name="Kanai K."/>
            <person name="Kashimoto K."/>
            <person name="Kimura S."/>
            <person name="Kitagawa M."/>
            <person name="Makino K."/>
            <person name="Masuda S."/>
            <person name="Miki T."/>
            <person name="Mizobuchi K."/>
            <person name="Mori H."/>
            <person name="Motomura K."/>
            <person name="Nakamura Y."/>
            <person name="Nashimoto H."/>
            <person name="Nishio Y."/>
            <person name="Saito N."/>
            <person name="Sampei G."/>
            <person name="Seki Y."/>
            <person name="Tagami H."/>
            <person name="Takemoto K."/>
            <person name="Wada C."/>
            <person name="Yamamoto Y."/>
            <person name="Yano M."/>
            <person name="Horiuchi T."/>
        </authorList>
    </citation>
    <scope>NUCLEOTIDE SEQUENCE [LARGE SCALE GENOMIC DNA]</scope>
    <source>
        <strain>K12 / W3110 / ATCC 27325 / DSM 5911</strain>
    </source>
</reference>
<reference key="2">
    <citation type="journal article" date="1997" name="Science">
        <title>The complete genome sequence of Escherichia coli K-12.</title>
        <authorList>
            <person name="Blattner F.R."/>
            <person name="Plunkett G. III"/>
            <person name="Bloch C.A."/>
            <person name="Perna N.T."/>
            <person name="Burland V."/>
            <person name="Riley M."/>
            <person name="Collado-Vides J."/>
            <person name="Glasner J.D."/>
            <person name="Rode C.K."/>
            <person name="Mayhew G.F."/>
            <person name="Gregor J."/>
            <person name="Davis N.W."/>
            <person name="Kirkpatrick H.A."/>
            <person name="Goeden M.A."/>
            <person name="Rose D.J."/>
            <person name="Mau B."/>
            <person name="Shao Y."/>
        </authorList>
    </citation>
    <scope>NUCLEOTIDE SEQUENCE [LARGE SCALE GENOMIC DNA]</scope>
    <source>
        <strain>K12 / MG1655 / ATCC 47076</strain>
    </source>
</reference>
<reference key="3">
    <citation type="journal article" date="2006" name="Mol. Syst. Biol.">
        <title>Highly accurate genome sequences of Escherichia coli K-12 strains MG1655 and W3110.</title>
        <authorList>
            <person name="Hayashi K."/>
            <person name="Morooka N."/>
            <person name="Yamamoto Y."/>
            <person name="Fujita K."/>
            <person name="Isono K."/>
            <person name="Choi S."/>
            <person name="Ohtsubo E."/>
            <person name="Baba T."/>
            <person name="Wanner B.L."/>
            <person name="Mori H."/>
            <person name="Horiuchi T."/>
        </authorList>
    </citation>
    <scope>NUCLEOTIDE SEQUENCE [LARGE SCALE GENOMIC DNA]</scope>
    <source>
        <strain>K12 / W3110 / ATCC 27325 / DSM 5911</strain>
    </source>
</reference>
<reference key="4">
    <citation type="journal article" date="1991" name="J. Biol. Chem.">
        <title>Characteristics of the gene for a spermidine and putrescine transport system that maps at 15 min on the Escherichia coli chromosome.</title>
        <authorList>
            <person name="Furuchi T."/>
            <person name="Kashiwagi K."/>
            <person name="Kobayashi H."/>
            <person name="Igarashi K."/>
        </authorList>
    </citation>
    <scope>NUCLEOTIDE SEQUENCE [GENOMIC DNA] OF 1-42</scope>
    <source>
        <strain>K12</strain>
    </source>
</reference>
<reference key="5">
    <citation type="journal article" date="1993" name="J. Bacteriol.">
        <title>Physical mapping of the Escherichia coli pepT and potABCD genes.</title>
        <authorList>
            <person name="Lombardo M.-J."/>
            <person name="Miller C.G."/>
            <person name="Rudd K.E."/>
        </authorList>
    </citation>
    <scope>IDENTIFICATION</scope>
</reference>
<reference key="6">
    <citation type="journal article" date="2005" name="Proteins">
        <title>Structural analysis of a set of proteins resulting from a bacterial genomics project.</title>
        <authorList>
            <person name="Badger J."/>
            <person name="Sauder J.M."/>
            <person name="Adams J.M."/>
            <person name="Antonysamy S."/>
            <person name="Bain K."/>
            <person name="Bergseid M.G."/>
            <person name="Buchanan S.G."/>
            <person name="Buchanan M.D."/>
            <person name="Batiyenko Y."/>
            <person name="Christopher J.A."/>
            <person name="Emtage S."/>
            <person name="Eroshkina A."/>
            <person name="Feil I."/>
            <person name="Furlong E.B."/>
            <person name="Gajiwala K.S."/>
            <person name="Gao X."/>
            <person name="He D."/>
            <person name="Hendle J."/>
            <person name="Huber A."/>
            <person name="Hoda K."/>
            <person name="Kearins P."/>
            <person name="Kissinger C."/>
            <person name="Laubert B."/>
            <person name="Lewis H.A."/>
            <person name="Lin J."/>
            <person name="Loomis K."/>
            <person name="Lorimer D."/>
            <person name="Louie G."/>
            <person name="Maletic M."/>
            <person name="Marsh C.D."/>
            <person name="Miller I."/>
            <person name="Molinari J."/>
            <person name="Muller-Dieckmann H.J."/>
            <person name="Newman J.M."/>
            <person name="Noland B.W."/>
            <person name="Pagarigan B."/>
            <person name="Park F."/>
            <person name="Peat T.S."/>
            <person name="Post K.W."/>
            <person name="Radojicic S."/>
            <person name="Ramos A."/>
            <person name="Romero R."/>
            <person name="Rutter M.E."/>
            <person name="Sanderson W.E."/>
            <person name="Schwinn K.D."/>
            <person name="Tresser J."/>
            <person name="Winhoven J."/>
            <person name="Wright T.A."/>
            <person name="Wu L."/>
            <person name="Xu J."/>
            <person name="Harris T.J.R."/>
        </authorList>
    </citation>
    <scope>X-RAY CRYSTALLOGRAPHY (2.5 ANGSTROMS) OF 2-408 IN COMPLEX WITH ZINC</scope>
    <scope>COFACTOR</scope>
    <scope>SUBUNIT</scope>
</reference>
<proteinExistence type="evidence at protein level"/>
<name>PEPT_ECOLI</name>
<gene>
    <name type="primary">pepT</name>
    <name type="ordered locus">b1127</name>
    <name type="ordered locus">JW1113</name>
</gene>
<keyword id="KW-0002">3D-structure</keyword>
<keyword id="KW-0031">Aminopeptidase</keyword>
<keyword id="KW-0963">Cytoplasm</keyword>
<keyword id="KW-0378">Hydrolase</keyword>
<keyword id="KW-0479">Metal-binding</keyword>
<keyword id="KW-0482">Metalloprotease</keyword>
<keyword id="KW-0645">Protease</keyword>
<keyword id="KW-1185">Reference proteome</keyword>
<keyword id="KW-0862">Zinc</keyword>
<accession>P29745</accession>
<accession>P77794</accession>
<comment type="function">
    <text evidence="1">Cleaves the N-terminal amino acid of tripeptides.</text>
</comment>
<comment type="catalytic activity">
    <reaction>
        <text>Release of the N-terminal residue from a tripeptide.</text>
        <dbReference type="EC" id="3.4.11.4"/>
    </reaction>
</comment>
<comment type="cofactor">
    <cofactor evidence="2">
        <name>Zn(2+)</name>
        <dbReference type="ChEBI" id="CHEBI:29105"/>
    </cofactor>
    <text evidence="2">Binds 2 Zn(2+) ions per subunit.</text>
</comment>
<comment type="subunit">
    <text evidence="4">Homodimer.</text>
</comment>
<comment type="interaction">
    <interactant intactId="EBI-555639">
        <id>P29745</id>
    </interactant>
    <interactant intactId="EBI-555623">
        <id>P0A7C6</id>
        <label>pepE</label>
    </interactant>
    <organismsDiffer>false</organismsDiffer>
    <experiments>4</experiments>
</comment>
<comment type="interaction">
    <interactant intactId="EBI-555639">
        <id>P29745</id>
    </interactant>
    <interactant intactId="EBI-368978">
        <id>P0A858</id>
        <label>tpiA</label>
    </interactant>
    <organismsDiffer>false</organismsDiffer>
    <experiments>7</experiments>
</comment>
<comment type="subcellular location">
    <subcellularLocation>
        <location evidence="1">Cytoplasm</location>
    </subcellularLocation>
</comment>
<comment type="similarity">
    <text evidence="3">Belongs to the peptidase M20B family.</text>
</comment>
<sequence>MDKLLERFLNYVSLDTQSKAGVRQVPSTEGQWKLLHLLKEQLEEMGLINVTLSEKGTLMATLPANVPGDIPAIGFISHVDTSPDCSGKNVNPQIVENYRGGDIALGIGDEVLSPVMFPVLHQLLGQTLITTDGKTLLGADDKAGIAEIMTALAVLQQKKIPHGDIRVAFTPDEEVGKGAKHFDVDAFDARWAYTVDGGGVGELEFENFNAASVNIKIVGNNVHPGTAKGVMVNALSLAARIHAEVPADESPEMTEGYEGFYHLASMKGTVERADMHYIIRDFDRKQFEARKRKMMEIAKKVGKGLHPDCYIELVIEDSYYNMREKVVEHPHILDIAQQAMRDCDIEPELKPIRGGTDGAQLSFMGLPCPNLFTGGYNYHGKHEFVTLEGMEKAVQVIVRIAELTAQRK</sequence>
<evidence type="ECO:0000250" key="1"/>
<evidence type="ECO:0000269" key="2">
    <source>
    </source>
</evidence>
<evidence type="ECO:0000305" key="3"/>
<evidence type="ECO:0000305" key="4">
    <source>
    </source>
</evidence>
<evidence type="ECO:0007829" key="5">
    <source>
        <dbReference type="PDB" id="1VIX"/>
    </source>
</evidence>
<dbReference type="EC" id="3.4.11.4"/>
<dbReference type="EMBL" id="U00096">
    <property type="protein sequence ID" value="AAC74211.1"/>
    <property type="molecule type" value="Genomic_DNA"/>
</dbReference>
<dbReference type="EMBL" id="AP009048">
    <property type="protein sequence ID" value="BAA35949.1"/>
    <property type="molecule type" value="Genomic_DNA"/>
</dbReference>
<dbReference type="EMBL" id="M64519">
    <property type="status" value="NOT_ANNOTATED_CDS"/>
    <property type="molecule type" value="Genomic_DNA"/>
</dbReference>
<dbReference type="PIR" id="D64857">
    <property type="entry name" value="D64857"/>
</dbReference>
<dbReference type="RefSeq" id="NP_415645.1">
    <property type="nucleotide sequence ID" value="NC_000913.3"/>
</dbReference>
<dbReference type="RefSeq" id="WP_000359434.1">
    <property type="nucleotide sequence ID" value="NZ_SSZK01000010.1"/>
</dbReference>
<dbReference type="PDB" id="1VIX">
    <property type="method" value="X-ray"/>
    <property type="resolution" value="2.50 A"/>
    <property type="chains" value="A/B=2-408"/>
</dbReference>
<dbReference type="PDBsum" id="1VIX"/>
<dbReference type="SMR" id="P29745"/>
<dbReference type="BioGRID" id="4261675">
    <property type="interactions" value="81"/>
</dbReference>
<dbReference type="BioGRID" id="850690">
    <property type="interactions" value="3"/>
</dbReference>
<dbReference type="DIP" id="DIP-10461N"/>
<dbReference type="FunCoup" id="P29745">
    <property type="interactions" value="72"/>
</dbReference>
<dbReference type="IntAct" id="P29745">
    <property type="interactions" value="20"/>
</dbReference>
<dbReference type="STRING" id="511145.b1127"/>
<dbReference type="MEROPS" id="M20.003"/>
<dbReference type="jPOST" id="P29745"/>
<dbReference type="PaxDb" id="511145-b1127"/>
<dbReference type="EnsemblBacteria" id="AAC74211">
    <property type="protein sequence ID" value="AAC74211"/>
    <property type="gene ID" value="b1127"/>
</dbReference>
<dbReference type="GeneID" id="946333"/>
<dbReference type="KEGG" id="ecj:JW1113"/>
<dbReference type="KEGG" id="eco:b1127"/>
<dbReference type="KEGG" id="ecoc:C3026_06785"/>
<dbReference type="PATRIC" id="fig|1411691.4.peg.1139"/>
<dbReference type="EchoBASE" id="EB1511"/>
<dbReference type="eggNOG" id="COG2195">
    <property type="taxonomic scope" value="Bacteria"/>
</dbReference>
<dbReference type="HOGENOM" id="CLU_053676_0_0_6"/>
<dbReference type="InParanoid" id="P29745"/>
<dbReference type="OMA" id="GHNFHGK"/>
<dbReference type="OrthoDB" id="9804934at2"/>
<dbReference type="PhylomeDB" id="P29745"/>
<dbReference type="BioCyc" id="EcoCyc:EG11549-MONOMER"/>
<dbReference type="BioCyc" id="MetaCyc:EG11549-MONOMER"/>
<dbReference type="EvolutionaryTrace" id="P29745"/>
<dbReference type="PRO" id="PR:P29745"/>
<dbReference type="Proteomes" id="UP000000625">
    <property type="component" value="Chromosome"/>
</dbReference>
<dbReference type="GO" id="GO:0005829">
    <property type="term" value="C:cytosol"/>
    <property type="evidence" value="ECO:0000314"/>
    <property type="project" value="EcoCyc"/>
</dbReference>
<dbReference type="GO" id="GO:0008237">
    <property type="term" value="F:metallopeptidase activity"/>
    <property type="evidence" value="ECO:0007669"/>
    <property type="project" value="UniProtKB-KW"/>
</dbReference>
<dbReference type="GO" id="GO:0042803">
    <property type="term" value="F:protein homodimerization activity"/>
    <property type="evidence" value="ECO:0000314"/>
    <property type="project" value="EcoCyc"/>
</dbReference>
<dbReference type="GO" id="GO:0045148">
    <property type="term" value="F:tripeptide aminopeptidase activity"/>
    <property type="evidence" value="ECO:0000314"/>
    <property type="project" value="EcoCyc"/>
</dbReference>
<dbReference type="GO" id="GO:0008270">
    <property type="term" value="F:zinc ion binding"/>
    <property type="evidence" value="ECO:0007669"/>
    <property type="project" value="UniProtKB-UniRule"/>
</dbReference>
<dbReference type="GO" id="GO:0043171">
    <property type="term" value="P:peptide catabolic process"/>
    <property type="evidence" value="ECO:0007669"/>
    <property type="project" value="UniProtKB-UniRule"/>
</dbReference>
<dbReference type="GO" id="GO:0006518">
    <property type="term" value="P:peptide metabolic process"/>
    <property type="evidence" value="ECO:0000314"/>
    <property type="project" value="EcoCyc"/>
</dbReference>
<dbReference type="GO" id="GO:0006508">
    <property type="term" value="P:proteolysis"/>
    <property type="evidence" value="ECO:0007669"/>
    <property type="project" value="UniProtKB-UniRule"/>
</dbReference>
<dbReference type="CDD" id="cd03892">
    <property type="entry name" value="M20_peptT"/>
    <property type="match status" value="1"/>
</dbReference>
<dbReference type="FunFam" id="3.30.70.360:FF:000002">
    <property type="entry name" value="Peptidase T"/>
    <property type="match status" value="1"/>
</dbReference>
<dbReference type="Gene3D" id="3.30.70.360">
    <property type="match status" value="1"/>
</dbReference>
<dbReference type="Gene3D" id="3.40.630.10">
    <property type="entry name" value="Zn peptidases"/>
    <property type="match status" value="1"/>
</dbReference>
<dbReference type="HAMAP" id="MF_00550">
    <property type="entry name" value="Aminopeptidase_M20"/>
    <property type="match status" value="1"/>
</dbReference>
<dbReference type="InterPro" id="IPR001261">
    <property type="entry name" value="ArgE/DapE_CS"/>
</dbReference>
<dbReference type="InterPro" id="IPR036264">
    <property type="entry name" value="Bact_exopeptidase_dim_dom"/>
</dbReference>
<dbReference type="InterPro" id="IPR002933">
    <property type="entry name" value="Peptidase_M20"/>
</dbReference>
<dbReference type="InterPro" id="IPR011650">
    <property type="entry name" value="Peptidase_M20_dimer"/>
</dbReference>
<dbReference type="InterPro" id="IPR010161">
    <property type="entry name" value="Peptidase_M20B"/>
</dbReference>
<dbReference type="NCBIfam" id="TIGR01882">
    <property type="entry name" value="peptidase-T"/>
    <property type="match status" value="1"/>
</dbReference>
<dbReference type="NCBIfam" id="NF003976">
    <property type="entry name" value="PRK05469.1"/>
    <property type="match status" value="1"/>
</dbReference>
<dbReference type="NCBIfam" id="NF009920">
    <property type="entry name" value="PRK13381.1"/>
    <property type="match status" value="1"/>
</dbReference>
<dbReference type="PANTHER" id="PTHR42994">
    <property type="entry name" value="PEPTIDASE T"/>
    <property type="match status" value="1"/>
</dbReference>
<dbReference type="PANTHER" id="PTHR42994:SF1">
    <property type="entry name" value="PEPTIDASE T"/>
    <property type="match status" value="1"/>
</dbReference>
<dbReference type="Pfam" id="PF07687">
    <property type="entry name" value="M20_dimer"/>
    <property type="match status" value="1"/>
</dbReference>
<dbReference type="Pfam" id="PF01546">
    <property type="entry name" value="Peptidase_M20"/>
    <property type="match status" value="1"/>
</dbReference>
<dbReference type="PIRSF" id="PIRSF037215">
    <property type="entry name" value="Peptidase_M20B"/>
    <property type="match status" value="1"/>
</dbReference>
<dbReference type="SUPFAM" id="SSF55031">
    <property type="entry name" value="Bacterial exopeptidase dimerisation domain"/>
    <property type="match status" value="1"/>
</dbReference>
<dbReference type="SUPFAM" id="SSF53187">
    <property type="entry name" value="Zn-dependent exopeptidases"/>
    <property type="match status" value="1"/>
</dbReference>
<dbReference type="PROSITE" id="PS00758">
    <property type="entry name" value="ARGE_DAPE_CPG2_1"/>
    <property type="match status" value="1"/>
</dbReference>
<dbReference type="PROSITE" id="PS00759">
    <property type="entry name" value="ARGE_DAPE_CPG2_2"/>
    <property type="match status" value="1"/>
</dbReference>
<organism>
    <name type="scientific">Escherichia coli (strain K12)</name>
    <dbReference type="NCBI Taxonomy" id="83333"/>
    <lineage>
        <taxon>Bacteria</taxon>
        <taxon>Pseudomonadati</taxon>
        <taxon>Pseudomonadota</taxon>
        <taxon>Gammaproteobacteria</taxon>
        <taxon>Enterobacterales</taxon>
        <taxon>Enterobacteriaceae</taxon>
        <taxon>Escherichia</taxon>
    </lineage>
</organism>
<feature type="chain" id="PRO_0000185292" description="Peptidase T">
    <location>
        <begin position="1"/>
        <end position="408"/>
    </location>
</feature>
<feature type="active site" evidence="1">
    <location>
        <position position="80"/>
    </location>
</feature>
<feature type="active site" description="Proton acceptor" evidence="1">
    <location>
        <position position="173"/>
    </location>
</feature>
<feature type="binding site" evidence="2">
    <location>
        <position position="78"/>
    </location>
    <ligand>
        <name>Zn(2+)</name>
        <dbReference type="ChEBI" id="CHEBI:29105"/>
        <label>1</label>
    </ligand>
</feature>
<feature type="binding site" evidence="2">
    <location>
        <position position="140"/>
    </location>
    <ligand>
        <name>Zn(2+)</name>
        <dbReference type="ChEBI" id="CHEBI:29105"/>
        <label>1</label>
    </ligand>
</feature>
<feature type="binding site" evidence="2">
    <location>
        <position position="140"/>
    </location>
    <ligand>
        <name>Zn(2+)</name>
        <dbReference type="ChEBI" id="CHEBI:29105"/>
        <label>2</label>
    </ligand>
</feature>
<feature type="binding site" evidence="2">
    <location>
        <position position="174"/>
    </location>
    <ligand>
        <name>Zn(2+)</name>
        <dbReference type="ChEBI" id="CHEBI:29105"/>
        <label>2</label>
    </ligand>
</feature>
<feature type="binding site" evidence="2">
    <location>
        <position position="196"/>
    </location>
    <ligand>
        <name>Zn(2+)</name>
        <dbReference type="ChEBI" id="CHEBI:29105"/>
        <label>1</label>
    </ligand>
</feature>
<feature type="binding site" evidence="2">
    <location>
        <position position="379"/>
    </location>
    <ligand>
        <name>Zn(2+)</name>
        <dbReference type="ChEBI" id="CHEBI:29105"/>
        <label>2</label>
    </ligand>
</feature>
<feature type="helix" evidence="5">
    <location>
        <begin position="2"/>
        <end position="13"/>
    </location>
</feature>
<feature type="strand" evidence="5">
    <location>
        <begin position="23"/>
        <end position="28"/>
    </location>
</feature>
<feature type="helix" evidence="5">
    <location>
        <begin position="30"/>
        <end position="43"/>
    </location>
</feature>
<feature type="turn" evidence="5">
    <location>
        <begin position="44"/>
        <end position="46"/>
    </location>
</feature>
<feature type="strand" evidence="5">
    <location>
        <begin position="48"/>
        <end position="52"/>
    </location>
</feature>
<feature type="strand" evidence="5">
    <location>
        <begin position="58"/>
        <end position="62"/>
    </location>
</feature>
<feature type="strand" evidence="5">
    <location>
        <begin position="73"/>
        <end position="78"/>
    </location>
</feature>
<feature type="strand" evidence="5">
    <location>
        <begin position="93"/>
        <end position="95"/>
    </location>
</feature>
<feature type="strand" evidence="5">
    <location>
        <begin position="103"/>
        <end position="105"/>
    </location>
</feature>
<feature type="turn" evidence="5">
    <location>
        <begin position="106"/>
        <end position="109"/>
    </location>
</feature>
<feature type="strand" evidence="5">
    <location>
        <begin position="110"/>
        <end position="112"/>
    </location>
</feature>
<feature type="turn" evidence="5">
    <location>
        <begin position="114"/>
        <end position="116"/>
    </location>
</feature>
<feature type="helix" evidence="5">
    <location>
        <begin position="118"/>
        <end position="122"/>
    </location>
</feature>
<feature type="strand" evidence="5">
    <location>
        <begin position="128"/>
        <end position="130"/>
    </location>
</feature>
<feature type="strand" evidence="5">
    <location>
        <begin position="133"/>
        <end position="135"/>
    </location>
</feature>
<feature type="helix" evidence="5">
    <location>
        <begin position="139"/>
        <end position="157"/>
    </location>
</feature>
<feature type="strand" evidence="5">
    <location>
        <begin position="165"/>
        <end position="171"/>
    </location>
</feature>
<feature type="helix" evidence="5">
    <location>
        <begin position="173"/>
        <end position="175"/>
    </location>
</feature>
<feature type="turn" evidence="5">
    <location>
        <begin position="178"/>
        <end position="181"/>
    </location>
</feature>
<feature type="helix" evidence="5">
    <location>
        <begin position="184"/>
        <end position="187"/>
    </location>
</feature>
<feature type="strand" evidence="5">
    <location>
        <begin position="190"/>
        <end position="195"/>
    </location>
</feature>
<feature type="strand" evidence="5">
    <location>
        <begin position="202"/>
        <end position="204"/>
    </location>
</feature>
<feature type="strand" evidence="5">
    <location>
        <begin position="209"/>
        <end position="218"/>
    </location>
</feature>
<feature type="helix" evidence="5">
    <location>
        <begin position="224"/>
        <end position="226"/>
    </location>
</feature>
<feature type="turn" evidence="5">
    <location>
        <begin position="228"/>
        <end position="230"/>
    </location>
</feature>
<feature type="helix" evidence="5">
    <location>
        <begin position="234"/>
        <end position="244"/>
    </location>
</feature>
<feature type="turn" evidence="5">
    <location>
        <begin position="251"/>
        <end position="253"/>
    </location>
</feature>
<feature type="strand" evidence="5">
    <location>
        <begin position="260"/>
        <end position="283"/>
    </location>
</feature>
<feature type="helix" evidence="5">
    <location>
        <begin position="284"/>
        <end position="302"/>
    </location>
</feature>
<feature type="strand" evidence="5">
    <location>
        <begin position="310"/>
        <end position="319"/>
    </location>
</feature>
<feature type="helix" evidence="5">
    <location>
        <begin position="323"/>
        <end position="327"/>
    </location>
</feature>
<feature type="helix" evidence="5">
    <location>
        <begin position="331"/>
        <end position="342"/>
    </location>
</feature>
<feature type="strand" evidence="5">
    <location>
        <begin position="352"/>
        <end position="354"/>
    </location>
</feature>
<feature type="helix" evidence="5">
    <location>
        <begin position="357"/>
        <end position="361"/>
    </location>
</feature>
<feature type="turn" evidence="5">
    <location>
        <begin position="362"/>
        <end position="365"/>
    </location>
</feature>
<feature type="strand" evidence="5">
    <location>
        <begin position="374"/>
        <end position="377"/>
    </location>
</feature>
<feature type="strand" evidence="5">
    <location>
        <begin position="384"/>
        <end position="386"/>
    </location>
</feature>
<feature type="helix" evidence="5">
    <location>
        <begin position="387"/>
        <end position="406"/>
    </location>
</feature>
<protein>
    <recommendedName>
        <fullName>Peptidase T</fullName>
        <ecNumber>3.4.11.4</ecNumber>
    </recommendedName>
    <alternativeName>
        <fullName>Aminotripeptidase</fullName>
        <shortName>Tripeptidase</shortName>
    </alternativeName>
    <alternativeName>
        <fullName>Tripeptide aminopeptidase</fullName>
    </alternativeName>
</protein>